<accession>B2RZW9</accession>
<reference key="1">
    <citation type="submission" date="2004-12" db="EMBL/GenBank/DDBJ databases">
        <title>The genome sequence of Borrelia hermsii and Borrelia turicatae: comparative analysis of two agents of endemic N. America relapsing fever.</title>
        <authorList>
            <person name="Porcella S.F."/>
            <person name="Raffel S.J."/>
            <person name="Schrumpf M.E."/>
            <person name="Montgomery B."/>
            <person name="Smith T."/>
            <person name="Schwan T.G."/>
        </authorList>
    </citation>
    <scope>NUCLEOTIDE SEQUENCE [LARGE SCALE GENOMIC DNA]</scope>
    <source>
        <strain>HS1 / DAH</strain>
    </source>
</reference>
<keyword id="KW-0046">Antibiotic resistance</keyword>
<keyword id="KW-0997">Cell inner membrane</keyword>
<keyword id="KW-1003">Cell membrane</keyword>
<keyword id="KW-0133">Cell shape</keyword>
<keyword id="KW-0961">Cell wall biogenesis/degradation</keyword>
<keyword id="KW-0378">Hydrolase</keyword>
<keyword id="KW-0472">Membrane</keyword>
<keyword id="KW-0573">Peptidoglycan synthesis</keyword>
<keyword id="KW-0812">Transmembrane</keyword>
<keyword id="KW-1133">Transmembrane helix</keyword>
<organism>
    <name type="scientific">Borrelia hermsii (strain HS1 / DAH)</name>
    <dbReference type="NCBI Taxonomy" id="314723"/>
    <lineage>
        <taxon>Bacteria</taxon>
        <taxon>Pseudomonadati</taxon>
        <taxon>Spirochaetota</taxon>
        <taxon>Spirochaetia</taxon>
        <taxon>Spirochaetales</taxon>
        <taxon>Borreliaceae</taxon>
        <taxon>Borrelia</taxon>
    </lineage>
</organism>
<gene>
    <name evidence="1" type="primary">uppP</name>
    <name type="ordered locus">BH0258</name>
</gene>
<name>UPPP_BORHD</name>
<feature type="chain" id="PRO_1000197352" description="Undecaprenyl-diphosphatase">
    <location>
        <begin position="1"/>
        <end position="264"/>
    </location>
</feature>
<feature type="transmembrane region" description="Helical" evidence="1">
    <location>
        <begin position="7"/>
        <end position="27"/>
    </location>
</feature>
<feature type="transmembrane region" description="Helical" evidence="1">
    <location>
        <begin position="39"/>
        <end position="59"/>
    </location>
</feature>
<feature type="transmembrane region" description="Helical" evidence="1">
    <location>
        <begin position="89"/>
        <end position="109"/>
    </location>
</feature>
<feature type="transmembrane region" description="Helical" evidence="1">
    <location>
        <begin position="112"/>
        <end position="132"/>
    </location>
</feature>
<feature type="transmembrane region" description="Helical" evidence="1">
    <location>
        <begin position="145"/>
        <end position="165"/>
    </location>
</feature>
<feature type="transmembrane region" description="Helical" evidence="1">
    <location>
        <begin position="182"/>
        <end position="202"/>
    </location>
</feature>
<feature type="transmembrane region" description="Helical" evidence="1">
    <location>
        <begin position="212"/>
        <end position="232"/>
    </location>
</feature>
<feature type="transmembrane region" description="Helical" evidence="1">
    <location>
        <begin position="244"/>
        <end position="264"/>
    </location>
</feature>
<proteinExistence type="inferred from homology"/>
<protein>
    <recommendedName>
        <fullName evidence="1">Undecaprenyl-diphosphatase</fullName>
        <ecNumber evidence="1">3.6.1.27</ecNumber>
    </recommendedName>
    <alternativeName>
        <fullName evidence="1">Bacitracin resistance protein</fullName>
    </alternativeName>
    <alternativeName>
        <fullName evidence="1">Undecaprenyl pyrophosphate phosphatase</fullName>
    </alternativeName>
</protein>
<comment type="function">
    <text evidence="1">Catalyzes the dephosphorylation of undecaprenyl diphosphate (UPP). Confers resistance to bacitracin.</text>
</comment>
<comment type="catalytic activity">
    <reaction evidence="1">
        <text>di-trans,octa-cis-undecaprenyl diphosphate + H2O = di-trans,octa-cis-undecaprenyl phosphate + phosphate + H(+)</text>
        <dbReference type="Rhea" id="RHEA:28094"/>
        <dbReference type="ChEBI" id="CHEBI:15377"/>
        <dbReference type="ChEBI" id="CHEBI:15378"/>
        <dbReference type="ChEBI" id="CHEBI:43474"/>
        <dbReference type="ChEBI" id="CHEBI:58405"/>
        <dbReference type="ChEBI" id="CHEBI:60392"/>
        <dbReference type="EC" id="3.6.1.27"/>
    </reaction>
</comment>
<comment type="subcellular location">
    <subcellularLocation>
        <location evidence="1">Cell inner membrane</location>
        <topology evidence="1">Multi-pass membrane protein</topology>
    </subcellularLocation>
</comment>
<comment type="miscellaneous">
    <text>Bacitracin is thought to be involved in the inhibition of peptidoglycan synthesis by sequestering undecaprenyl diphosphate, thereby reducing the pool of lipid carrier available.</text>
</comment>
<comment type="similarity">
    <text evidence="1">Belongs to the UppP family.</text>
</comment>
<evidence type="ECO:0000255" key="1">
    <source>
        <dbReference type="HAMAP-Rule" id="MF_01006"/>
    </source>
</evidence>
<sequence length="264" mass="29810">MENVLRVVILGFIQGIAEFLPISSSGHLLLLKKFMHIDLPIVFDIYLHLATVLVVMIYYCRRILELVAVLVKFVLGKTTECDFAKLRLILLILIITIITAFIGIFIEMFKGLFTLNLVLINFIVTSILLFLLESRIVIFDLKRNILLAGCLIGTMQGIGAMPGISRSGITIFASVLLGFSRSESFEISFLSLIPIVFGSLLLKYKELFESDMLFSIFEINLGAIIAFLVGLFSISLFVKMLQDSKLYYFSVYLIILVSLVYFLF</sequence>
<dbReference type="EC" id="3.6.1.27" evidence="1"/>
<dbReference type="EMBL" id="CP000048">
    <property type="protein sequence ID" value="AAX16775.1"/>
    <property type="molecule type" value="Genomic_DNA"/>
</dbReference>
<dbReference type="RefSeq" id="WP_012422032.1">
    <property type="nucleotide sequence ID" value="NZ_CP073136.1"/>
</dbReference>
<dbReference type="SMR" id="B2RZW9"/>
<dbReference type="KEGG" id="bhr:BH0258"/>
<dbReference type="HOGENOM" id="CLU_060296_1_2_12"/>
<dbReference type="Proteomes" id="UP000008834">
    <property type="component" value="Chromosome"/>
</dbReference>
<dbReference type="GO" id="GO:0005886">
    <property type="term" value="C:plasma membrane"/>
    <property type="evidence" value="ECO:0007669"/>
    <property type="project" value="UniProtKB-SubCell"/>
</dbReference>
<dbReference type="GO" id="GO:0050380">
    <property type="term" value="F:undecaprenyl-diphosphatase activity"/>
    <property type="evidence" value="ECO:0007669"/>
    <property type="project" value="UniProtKB-UniRule"/>
</dbReference>
<dbReference type="GO" id="GO:0071555">
    <property type="term" value="P:cell wall organization"/>
    <property type="evidence" value="ECO:0007669"/>
    <property type="project" value="UniProtKB-KW"/>
</dbReference>
<dbReference type="GO" id="GO:0009252">
    <property type="term" value="P:peptidoglycan biosynthetic process"/>
    <property type="evidence" value="ECO:0007669"/>
    <property type="project" value="UniProtKB-KW"/>
</dbReference>
<dbReference type="GO" id="GO:0008360">
    <property type="term" value="P:regulation of cell shape"/>
    <property type="evidence" value="ECO:0007669"/>
    <property type="project" value="UniProtKB-KW"/>
</dbReference>
<dbReference type="GO" id="GO:0046677">
    <property type="term" value="P:response to antibiotic"/>
    <property type="evidence" value="ECO:0007669"/>
    <property type="project" value="UniProtKB-UniRule"/>
</dbReference>
<dbReference type="HAMAP" id="MF_01006">
    <property type="entry name" value="Undec_diphosphatase"/>
    <property type="match status" value="1"/>
</dbReference>
<dbReference type="InterPro" id="IPR003824">
    <property type="entry name" value="UppP"/>
</dbReference>
<dbReference type="NCBIfam" id="NF001396">
    <property type="entry name" value="PRK00281.3-3"/>
    <property type="match status" value="1"/>
</dbReference>
<dbReference type="NCBIfam" id="TIGR00753">
    <property type="entry name" value="undec_PP_bacA"/>
    <property type="match status" value="1"/>
</dbReference>
<dbReference type="PANTHER" id="PTHR30622">
    <property type="entry name" value="UNDECAPRENYL-DIPHOSPHATASE"/>
    <property type="match status" value="1"/>
</dbReference>
<dbReference type="PANTHER" id="PTHR30622:SF4">
    <property type="entry name" value="UNDECAPRENYL-DIPHOSPHATASE"/>
    <property type="match status" value="1"/>
</dbReference>
<dbReference type="Pfam" id="PF02673">
    <property type="entry name" value="BacA"/>
    <property type="match status" value="1"/>
</dbReference>